<accession>Q87DY5</accession>
<reference key="1">
    <citation type="journal article" date="2003" name="J. Bacteriol.">
        <title>Comparative analyses of the complete genome sequences of Pierce's disease and citrus variegated chlorosis strains of Xylella fastidiosa.</title>
        <authorList>
            <person name="Van Sluys M.A."/>
            <person name="de Oliveira M.C."/>
            <person name="Monteiro-Vitorello C.B."/>
            <person name="Miyaki C.Y."/>
            <person name="Furlan L.R."/>
            <person name="Camargo L.E.A."/>
            <person name="da Silva A.C.R."/>
            <person name="Moon D.H."/>
            <person name="Takita M.A."/>
            <person name="Lemos E.G.M."/>
            <person name="Machado M.A."/>
            <person name="Ferro M.I.T."/>
            <person name="da Silva F.R."/>
            <person name="Goldman M.H.S."/>
            <person name="Goldman G.H."/>
            <person name="Lemos M.V.F."/>
            <person name="El-Dorry H."/>
            <person name="Tsai S.M."/>
            <person name="Carrer H."/>
            <person name="Carraro D.M."/>
            <person name="de Oliveira R.C."/>
            <person name="Nunes L.R."/>
            <person name="Siqueira W.J."/>
            <person name="Coutinho L.L."/>
            <person name="Kimura E.T."/>
            <person name="Ferro E.S."/>
            <person name="Harakava R."/>
            <person name="Kuramae E.E."/>
            <person name="Marino C.L."/>
            <person name="Giglioti E."/>
            <person name="Abreu I.L."/>
            <person name="Alves L.M.C."/>
            <person name="do Amaral A.M."/>
            <person name="Baia G.S."/>
            <person name="Blanco S.R."/>
            <person name="Brito M.S."/>
            <person name="Cannavan F.S."/>
            <person name="Celestino A.V."/>
            <person name="da Cunha A.F."/>
            <person name="Fenille R.C."/>
            <person name="Ferro J.A."/>
            <person name="Formighieri E.F."/>
            <person name="Kishi L.T."/>
            <person name="Leoni S.G."/>
            <person name="Oliveira A.R."/>
            <person name="Rosa V.E. Jr."/>
            <person name="Sassaki F.T."/>
            <person name="Sena J.A.D."/>
            <person name="de Souza A.A."/>
            <person name="Truffi D."/>
            <person name="Tsukumo F."/>
            <person name="Yanai G.M."/>
            <person name="Zaros L.G."/>
            <person name="Civerolo E.L."/>
            <person name="Simpson A.J.G."/>
            <person name="Almeida N.F. Jr."/>
            <person name="Setubal J.C."/>
            <person name="Kitajima J.P."/>
        </authorList>
    </citation>
    <scope>NUCLEOTIDE SEQUENCE [LARGE SCALE GENOMIC DNA]</scope>
    <source>
        <strain>Temecula1 / ATCC 700964</strain>
    </source>
</reference>
<feature type="chain" id="PRO_0000214464" description="Cell division protein FtsB">
    <location>
        <begin position="1"/>
        <end position="118"/>
    </location>
</feature>
<feature type="topological domain" description="Cytoplasmic" evidence="1">
    <location>
        <begin position="1"/>
        <end position="6"/>
    </location>
</feature>
<feature type="transmembrane region" description="Helical" evidence="1">
    <location>
        <begin position="7"/>
        <end position="24"/>
    </location>
</feature>
<feature type="topological domain" description="Periplasmic" evidence="1">
    <location>
        <begin position="25"/>
        <end position="118"/>
    </location>
</feature>
<feature type="region of interest" description="Disordered" evidence="2">
    <location>
        <begin position="98"/>
        <end position="118"/>
    </location>
</feature>
<feature type="coiled-coil region" evidence="1">
    <location>
        <begin position="30"/>
        <end position="66"/>
    </location>
</feature>
<feature type="compositionally biased region" description="Basic and acidic residues" evidence="2">
    <location>
        <begin position="103"/>
        <end position="118"/>
    </location>
</feature>
<sequence length="118" mass="13679">MRNWRWLLLVLAALLAWLQHRFWFGPGNSGEVRMLQVQIVQQHQENERLRQRNASLAAEVKNLKDGDAAIEERARSELGMIKPGEIFYRVVEDIPVPLPNDTSADHGVDLSQPRREKR</sequence>
<protein>
    <recommendedName>
        <fullName evidence="1">Cell division protein FtsB</fullName>
    </recommendedName>
</protein>
<comment type="function">
    <text evidence="1">Essential cell division protein. May link together the upstream cell division proteins, which are predominantly cytoplasmic, with the downstream cell division proteins, which are predominantly periplasmic.</text>
</comment>
<comment type="subunit">
    <text evidence="1">Part of a complex composed of FtsB, FtsL and FtsQ.</text>
</comment>
<comment type="subcellular location">
    <subcellularLocation>
        <location evidence="1">Cell inner membrane</location>
        <topology evidence="1">Single-pass type II membrane protein</topology>
    </subcellularLocation>
    <text evidence="1">Localizes to the division septum.</text>
</comment>
<comment type="similarity">
    <text evidence="1">Belongs to the FtsB family.</text>
</comment>
<gene>
    <name evidence="1" type="primary">ftsB</name>
    <name type="ordered locus">PD_0544</name>
</gene>
<name>FTSB_XYLFT</name>
<proteinExistence type="inferred from homology"/>
<keyword id="KW-0131">Cell cycle</keyword>
<keyword id="KW-0132">Cell division</keyword>
<keyword id="KW-0997">Cell inner membrane</keyword>
<keyword id="KW-1003">Cell membrane</keyword>
<keyword id="KW-0175">Coiled coil</keyword>
<keyword id="KW-0472">Membrane</keyword>
<keyword id="KW-1185">Reference proteome</keyword>
<keyword id="KW-0812">Transmembrane</keyword>
<keyword id="KW-1133">Transmembrane helix</keyword>
<organism>
    <name type="scientific">Xylella fastidiosa (strain Temecula1 / ATCC 700964)</name>
    <dbReference type="NCBI Taxonomy" id="183190"/>
    <lineage>
        <taxon>Bacteria</taxon>
        <taxon>Pseudomonadati</taxon>
        <taxon>Pseudomonadota</taxon>
        <taxon>Gammaproteobacteria</taxon>
        <taxon>Lysobacterales</taxon>
        <taxon>Lysobacteraceae</taxon>
        <taxon>Xylella</taxon>
    </lineage>
</organism>
<dbReference type="EMBL" id="AE009442">
    <property type="protein sequence ID" value="AAO28417.1"/>
    <property type="molecule type" value="Genomic_DNA"/>
</dbReference>
<dbReference type="RefSeq" id="WP_011097688.1">
    <property type="nucleotide sequence ID" value="NC_004556.1"/>
</dbReference>
<dbReference type="SMR" id="Q87DY5"/>
<dbReference type="GeneID" id="93904255"/>
<dbReference type="KEGG" id="xft:PD_0544"/>
<dbReference type="HOGENOM" id="CLU_134863_5_1_6"/>
<dbReference type="Proteomes" id="UP000002516">
    <property type="component" value="Chromosome"/>
</dbReference>
<dbReference type="GO" id="GO:0032153">
    <property type="term" value="C:cell division site"/>
    <property type="evidence" value="ECO:0007669"/>
    <property type="project" value="UniProtKB-UniRule"/>
</dbReference>
<dbReference type="GO" id="GO:0030428">
    <property type="term" value="C:cell septum"/>
    <property type="evidence" value="ECO:0007669"/>
    <property type="project" value="TreeGrafter"/>
</dbReference>
<dbReference type="GO" id="GO:0005886">
    <property type="term" value="C:plasma membrane"/>
    <property type="evidence" value="ECO:0007669"/>
    <property type="project" value="UniProtKB-SubCell"/>
</dbReference>
<dbReference type="GO" id="GO:0043093">
    <property type="term" value="P:FtsZ-dependent cytokinesis"/>
    <property type="evidence" value="ECO:0007669"/>
    <property type="project" value="UniProtKB-UniRule"/>
</dbReference>
<dbReference type="HAMAP" id="MF_00599">
    <property type="entry name" value="FtsB"/>
    <property type="match status" value="1"/>
</dbReference>
<dbReference type="InterPro" id="IPR023081">
    <property type="entry name" value="Cell_div_FtsB"/>
</dbReference>
<dbReference type="InterPro" id="IPR007060">
    <property type="entry name" value="FtsL/DivIC"/>
</dbReference>
<dbReference type="NCBIfam" id="NF002058">
    <property type="entry name" value="PRK00888.1"/>
    <property type="match status" value="1"/>
</dbReference>
<dbReference type="PANTHER" id="PTHR37485">
    <property type="entry name" value="CELL DIVISION PROTEIN FTSB"/>
    <property type="match status" value="1"/>
</dbReference>
<dbReference type="PANTHER" id="PTHR37485:SF1">
    <property type="entry name" value="CELL DIVISION PROTEIN FTSB"/>
    <property type="match status" value="1"/>
</dbReference>
<dbReference type="Pfam" id="PF04977">
    <property type="entry name" value="DivIC"/>
    <property type="match status" value="1"/>
</dbReference>
<evidence type="ECO:0000255" key="1">
    <source>
        <dbReference type="HAMAP-Rule" id="MF_00599"/>
    </source>
</evidence>
<evidence type="ECO:0000256" key="2">
    <source>
        <dbReference type="SAM" id="MobiDB-lite"/>
    </source>
</evidence>